<keyword id="KW-0963">Cytoplasm</keyword>
<keyword id="KW-0275">Fatty acid biosynthesis</keyword>
<keyword id="KW-0276">Fatty acid metabolism</keyword>
<keyword id="KW-0444">Lipid biosynthesis</keyword>
<keyword id="KW-0443">Lipid metabolism</keyword>
<keyword id="KW-0596">Phosphopantetheine</keyword>
<keyword id="KW-0597">Phosphoprotein</keyword>
<keyword id="KW-0687">Ribonucleoprotein</keyword>
<keyword id="KW-0689">Ribosomal protein</keyword>
<protein>
    <recommendedName>
        <fullName evidence="5">Large ribosomal subunit protein P2</fullName>
    </recommendedName>
    <alternativeName>
        <fullName>60S acidic ribosomal protein P2</fullName>
    </alternativeName>
    <alternativeName>
        <fullName>Acyl carrier protein</fullName>
    </alternativeName>
</protein>
<name>RLA2_RHOGU</name>
<accession>Q96UQ7</accession>
<sequence>MKHVAAYLLLVSAGNTSPSAEDVKKVLAAADIQADEERLSVLIKELEGKDVNEVIAEGSKKLASVPSGGAAPAAAAGGAAAGGAAEEKAEDKPAEKDEESDDDMGFGLFD</sequence>
<comment type="function">
    <text evidence="1">Probable bifunctional protein. The phosphorylated protein plays an important role in the elongation step of protein synthesis (By similarity). The phosphopantetheinylated protein acts as an acyl carrier protein.</text>
</comment>
<comment type="subunit">
    <text evidence="1 3">The phosphorylated form is part of the ribosomal stalk involved in the interaction of the elongation factors with the ribosome during protein synthesis (By similarity). The phosphopantetheinylated form is part of the 10S triacylglycerol biosynthetic complex involved in de novo fatty acid biosynthesis.</text>
</comment>
<comment type="subcellular location">
    <subcellularLocation>
        <location>Cytoplasm</location>
    </subcellularLocation>
</comment>
<comment type="PTM">
    <text evidence="4">4'-phosphopantetheine is transferred from CoA to a specific serine by acpS. This modification is essential for activity because fatty acids are bound in thioester linkage to the sulfhydryl of the prosthetic group.</text>
</comment>
<comment type="similarity">
    <text evidence="5">Belongs to the eukaryotic ribosomal protein P1/P2 family.</text>
</comment>
<feature type="chain" id="PRO_0000157680" description="Large ribosomal subunit protein P2">
    <location>
        <begin position="1"/>
        <end position="110"/>
    </location>
</feature>
<feature type="region of interest" description="Disordered" evidence="2">
    <location>
        <begin position="62"/>
        <end position="110"/>
    </location>
</feature>
<feature type="compositionally biased region" description="Low complexity" evidence="2">
    <location>
        <begin position="63"/>
        <end position="84"/>
    </location>
</feature>
<feature type="compositionally biased region" description="Basic and acidic residues" evidence="2">
    <location>
        <begin position="85"/>
        <end position="95"/>
    </location>
</feature>
<feature type="modified residue" description="O-(pantetheine 4'-phosphoryl)serine; in acyl carrier protein form" evidence="4">
    <location>
        <position position="59"/>
    </location>
</feature>
<feature type="modified residue" description="Phosphoserine; in ribosomal stalk form" evidence="1">
    <location>
        <position position="100"/>
    </location>
</feature>
<feature type="mutagenesis site" description="No change in acylation capacity." evidence="4">
    <original>S</original>
    <variation>A</variation>
    <location>
        <position position="12"/>
    </location>
</feature>
<feature type="mutagenesis site" description="No change in acylation capacity." evidence="4">
    <original>S</original>
    <variation>A</variation>
    <location>
        <position position="17"/>
    </location>
</feature>
<feature type="mutagenesis site" description="No change in acylation capacity." evidence="4">
    <original>S</original>
    <variation>A</variation>
    <location>
        <position position="19"/>
    </location>
</feature>
<feature type="mutagenesis site" description="No change in acylation capacity." evidence="4">
    <original>S</original>
    <variation>A</variation>
    <location>
        <position position="40"/>
    </location>
</feature>
<feature type="mutagenesis site" description="Abolishes acylation capacity." evidence="4">
    <original>S</original>
    <variation>A</variation>
    <location>
        <position position="59"/>
    </location>
</feature>
<feature type="mutagenesis site" description="No change in acylation capacity." evidence="4">
    <original>S</original>
    <variation>A</variation>
    <location>
        <position position="64"/>
    </location>
</feature>
<feature type="mutagenesis site" description="No change in acylation capacity." evidence="4">
    <original>S</original>
    <variation>A</variation>
    <location>
        <position position="67"/>
    </location>
</feature>
<feature type="mutagenesis site" description="No change in acylation capacity." evidence="4">
    <original>S</original>
    <variation>A</variation>
    <location>
        <position position="100"/>
    </location>
</feature>
<proteinExistence type="evidence at protein level"/>
<reference evidence="5" key="1">
    <citation type="journal article" date="2003" name="J. Biol. Chem.">
        <title>Nonorganellar acyl carrier protein from oleaginous yeast is a homologue of ribosomal protein P2.</title>
        <authorList>
            <person name="Raychaudhuri S."/>
            <person name="Rajasekharan R."/>
        </authorList>
    </citation>
    <scope>NUCLEOTIDE SEQUENCE [MRNA]</scope>
    <scope>PHOSPHOPANTETHEINYLATION AT SER-59</scope>
    <scope>MUTAGENESIS OF SER-12; SER-17; SER-19; SER-40; SER-59; SER-64; SER-67 AND SER-100</scope>
    <scope>IDENTIFICATION BY MASS SPECTROMETRY</scope>
</reference>
<reference evidence="5" key="2">
    <citation type="journal article" date="2001" name="J. Biol. Chem.">
        <title>Isolation and localization of a cytosolic 10 S triacylglycerol biosynthetic multienzyme complex from oleaginous yeast.</title>
        <authorList>
            <person name="Gangar A."/>
            <person name="Karande A.A."/>
            <person name="Rajasekharan R."/>
        </authorList>
    </citation>
    <scope>SUBUNIT</scope>
</reference>
<organism evidence="6">
    <name type="scientific">Rhodotorula glutinis</name>
    <name type="common">Yeast</name>
    <dbReference type="NCBI Taxonomy" id="5535"/>
    <lineage>
        <taxon>Eukaryota</taxon>
        <taxon>Fungi</taxon>
        <taxon>Dikarya</taxon>
        <taxon>Basidiomycota</taxon>
        <taxon>Pucciniomycotina</taxon>
        <taxon>Microbotryomycetes</taxon>
        <taxon>Sporidiobolales</taxon>
        <taxon>Sporidiobolaceae</taxon>
        <taxon>Rhodotorula</taxon>
    </lineage>
</organism>
<dbReference type="EMBL" id="AF434667">
    <property type="protein sequence ID" value="AAL30745.1"/>
    <property type="molecule type" value="mRNA"/>
</dbReference>
<dbReference type="SMR" id="Q96UQ7"/>
<dbReference type="GO" id="GO:0022625">
    <property type="term" value="C:cytosolic large ribosomal subunit"/>
    <property type="evidence" value="ECO:0007669"/>
    <property type="project" value="InterPro"/>
</dbReference>
<dbReference type="GO" id="GO:0005840">
    <property type="term" value="C:ribosome"/>
    <property type="evidence" value="ECO:0000303"/>
    <property type="project" value="UniProtKB"/>
</dbReference>
<dbReference type="GO" id="GO:0000036">
    <property type="term" value="F:acyl carrier activity"/>
    <property type="evidence" value="ECO:0000314"/>
    <property type="project" value="UniProtKB"/>
</dbReference>
<dbReference type="GO" id="GO:0003735">
    <property type="term" value="F:structural constituent of ribosome"/>
    <property type="evidence" value="ECO:0000303"/>
    <property type="project" value="UniProtKB"/>
</dbReference>
<dbReference type="GO" id="GO:0002182">
    <property type="term" value="P:cytoplasmic translational elongation"/>
    <property type="evidence" value="ECO:0007669"/>
    <property type="project" value="InterPro"/>
</dbReference>
<dbReference type="GO" id="GO:0006633">
    <property type="term" value="P:fatty acid biosynthetic process"/>
    <property type="evidence" value="ECO:0000314"/>
    <property type="project" value="UniProtKB"/>
</dbReference>
<dbReference type="GO" id="GO:0008610">
    <property type="term" value="P:lipid biosynthetic process"/>
    <property type="evidence" value="ECO:0000303"/>
    <property type="project" value="UniProtKB"/>
</dbReference>
<dbReference type="CDD" id="cd05833">
    <property type="entry name" value="Ribosomal_P2"/>
    <property type="match status" value="1"/>
</dbReference>
<dbReference type="FunFam" id="1.10.10.1410:FF:000002">
    <property type="entry name" value="60S acidic ribosomal protein P2"/>
    <property type="match status" value="1"/>
</dbReference>
<dbReference type="Gene3D" id="1.10.10.1410">
    <property type="match status" value="1"/>
</dbReference>
<dbReference type="HAMAP" id="MF_01478">
    <property type="entry name" value="Ribosomal_L12_arch"/>
    <property type="match status" value="1"/>
</dbReference>
<dbReference type="InterPro" id="IPR038716">
    <property type="entry name" value="P1/P2_N_sf"/>
</dbReference>
<dbReference type="InterPro" id="IPR027534">
    <property type="entry name" value="Ribosomal_P1/P2"/>
</dbReference>
<dbReference type="InterPro" id="IPR044076">
    <property type="entry name" value="Ribosomal_P2"/>
</dbReference>
<dbReference type="PANTHER" id="PTHR21141">
    <property type="entry name" value="60S ACIDIC RIBOSOMAL PROTEIN FAMILY MEMBER"/>
    <property type="match status" value="1"/>
</dbReference>
<dbReference type="PANTHER" id="PTHR21141:SF5">
    <property type="entry name" value="LARGE RIBOSOMAL SUBUNIT PROTEIN P2"/>
    <property type="match status" value="1"/>
</dbReference>
<dbReference type="Pfam" id="PF00428">
    <property type="entry name" value="Ribosomal_60s"/>
    <property type="match status" value="1"/>
</dbReference>
<evidence type="ECO:0000250" key="1"/>
<evidence type="ECO:0000256" key="2">
    <source>
        <dbReference type="SAM" id="MobiDB-lite"/>
    </source>
</evidence>
<evidence type="ECO:0000269" key="3">
    <source>
    </source>
</evidence>
<evidence type="ECO:0000269" key="4">
    <source>
    </source>
</evidence>
<evidence type="ECO:0000305" key="5"/>
<evidence type="ECO:0000312" key="6">
    <source>
        <dbReference type="EMBL" id="AAL30745.1"/>
    </source>
</evidence>